<protein>
    <recommendedName>
        <fullName evidence="1">UDP-N-acetylmuramoyl-L-alanyl-D-glutamate--L-lysine ligase</fullName>
        <ecNumber evidence="1">6.3.2.7</ecNumber>
    </recommendedName>
    <alternativeName>
        <fullName evidence="1">L-lysine-adding enzyme</fullName>
    </alternativeName>
    <alternativeName>
        <fullName evidence="1">UDP-MurNAc-L-Ala-D-Glu:L-Lys ligase</fullName>
    </alternativeName>
    <alternativeName>
        <fullName evidence="1">UDP-MurNAc-tripeptide synthetase</fullName>
    </alternativeName>
    <alternativeName>
        <fullName evidence="1">UDP-N-acetylmuramyl-tripeptide synthetase</fullName>
    </alternativeName>
</protein>
<feature type="chain" id="PRO_0000101942" description="UDP-N-acetylmuramoyl-L-alanyl-D-glutamate--L-lysine ligase">
    <location>
        <begin position="1"/>
        <end position="494"/>
    </location>
</feature>
<feature type="short sequence motif" description="L-lysine recognition motif">
    <location>
        <begin position="406"/>
        <end position="409"/>
    </location>
</feature>
<feature type="binding site" evidence="1">
    <location>
        <position position="30"/>
    </location>
    <ligand>
        <name>UDP-N-acetyl-alpha-D-muramoyl-L-alanyl-D-glutamate</name>
        <dbReference type="ChEBI" id="CHEBI:83900"/>
    </ligand>
</feature>
<feature type="binding site" evidence="1">
    <location>
        <begin position="110"/>
        <end position="116"/>
    </location>
    <ligand>
        <name>ATP</name>
        <dbReference type="ChEBI" id="CHEBI:30616"/>
    </ligand>
</feature>
<feature type="binding site" evidence="1">
    <location>
        <begin position="152"/>
        <end position="153"/>
    </location>
    <ligand>
        <name>UDP-N-acetyl-alpha-D-muramoyl-L-alanyl-D-glutamate</name>
        <dbReference type="ChEBI" id="CHEBI:83900"/>
    </ligand>
</feature>
<feature type="binding site" evidence="1">
    <location>
        <position position="179"/>
    </location>
    <ligand>
        <name>UDP-N-acetyl-alpha-D-muramoyl-L-alanyl-D-glutamate</name>
        <dbReference type="ChEBI" id="CHEBI:83900"/>
    </ligand>
</feature>
<feature type="binding site" evidence="1">
    <location>
        <position position="187"/>
    </location>
    <ligand>
        <name>UDP-N-acetyl-alpha-D-muramoyl-L-alanyl-D-glutamate</name>
        <dbReference type="ChEBI" id="CHEBI:83900"/>
    </ligand>
</feature>
<feature type="modified residue" description="N6-carboxylysine" evidence="1">
    <location>
        <position position="219"/>
    </location>
</feature>
<organism>
    <name type="scientific">Staphylococcus aureus (strain N315)</name>
    <dbReference type="NCBI Taxonomy" id="158879"/>
    <lineage>
        <taxon>Bacteria</taxon>
        <taxon>Bacillati</taxon>
        <taxon>Bacillota</taxon>
        <taxon>Bacilli</taxon>
        <taxon>Bacillales</taxon>
        <taxon>Staphylococcaceae</taxon>
        <taxon>Staphylococcus</taxon>
    </lineage>
</organism>
<reference key="1">
    <citation type="journal article" date="2001" name="Lancet">
        <title>Whole genome sequencing of meticillin-resistant Staphylococcus aureus.</title>
        <authorList>
            <person name="Kuroda M."/>
            <person name="Ohta T."/>
            <person name="Uchiyama I."/>
            <person name="Baba T."/>
            <person name="Yuzawa H."/>
            <person name="Kobayashi I."/>
            <person name="Cui L."/>
            <person name="Oguchi A."/>
            <person name="Aoki K."/>
            <person name="Nagai Y."/>
            <person name="Lian J.-Q."/>
            <person name="Ito T."/>
            <person name="Kanamori M."/>
            <person name="Matsumaru H."/>
            <person name="Maruyama A."/>
            <person name="Murakami H."/>
            <person name="Hosoyama A."/>
            <person name="Mizutani-Ui Y."/>
            <person name="Takahashi N.K."/>
            <person name="Sawano T."/>
            <person name="Inoue R."/>
            <person name="Kaito C."/>
            <person name="Sekimizu K."/>
            <person name="Hirakawa H."/>
            <person name="Kuhara S."/>
            <person name="Goto S."/>
            <person name="Yabuzaki J."/>
            <person name="Kanehisa M."/>
            <person name="Yamashita A."/>
            <person name="Oshima K."/>
            <person name="Furuya K."/>
            <person name="Yoshino C."/>
            <person name="Shiba T."/>
            <person name="Hattori M."/>
            <person name="Ogasawara N."/>
            <person name="Hayashi H."/>
            <person name="Hiramatsu K."/>
        </authorList>
    </citation>
    <scope>NUCLEOTIDE SEQUENCE [LARGE SCALE GENOMIC DNA]</scope>
    <source>
        <strain>N315</strain>
    </source>
</reference>
<reference key="2">
    <citation type="submission" date="2007-10" db="UniProtKB">
        <title>Shotgun proteomic analysis of total and membrane protein extracts of S. aureus strain N315.</title>
        <authorList>
            <person name="Vaezzadeh A.R."/>
            <person name="Deshusses J."/>
            <person name="Lescuyer P."/>
            <person name="Hochstrasser D.F."/>
        </authorList>
    </citation>
    <scope>IDENTIFICATION BY MASS SPECTROMETRY [LARGE SCALE ANALYSIS]</scope>
    <source>
        <strain>N315</strain>
    </source>
</reference>
<sequence>MDASTLFKKVKVKRVLGSLEQQIDDITTDSRTAREGSIFVASVGYTVDSHKFCQNVADQGCKLVVVNKEQSLPANVTQVVVPDTLRVASILAHTLYDYPSHQLVTFGVTGTNGKTSIATMIHLIQRKLQKNSAYLGTNGFQINETKTKGANTTPETVSLTKKIKEAVDAGAESMTLEVSSHGLVLGRLRGVEFDVAIFSNLTQDHLDFHGTMEAYGHAKSLLFSQLGEDLSKEKYVVLNNDDSFSEYLRTVTPYEVFSYGIDEEAQFMAKNIQESLQGVSFDFVTPFGTYPVKSPYVGKFNISNIMAAMIAVWSKGTSLETIIKAVENLEPVEGRLEVLDPSLPIDLIIDYAHTADGMNKLIDAVQPFVKQKLIFLVGMAGERDLTKTPEMGRVACRADYVIFTPDNPANDDPKMLTAELAKGATHQNYIEFDDRAEGIKHAIDIAEPGDTVVLASKGREPYQIMPGHIKVPHRDDLIGLEAAYKKFGGGPVDQ</sequence>
<evidence type="ECO:0000255" key="1">
    <source>
        <dbReference type="HAMAP-Rule" id="MF_00208"/>
    </source>
</evidence>
<keyword id="KW-0067">ATP-binding</keyword>
<keyword id="KW-0131">Cell cycle</keyword>
<keyword id="KW-0132">Cell division</keyword>
<keyword id="KW-0133">Cell shape</keyword>
<keyword id="KW-0961">Cell wall biogenesis/degradation</keyword>
<keyword id="KW-0963">Cytoplasm</keyword>
<keyword id="KW-0436">Ligase</keyword>
<keyword id="KW-0547">Nucleotide-binding</keyword>
<keyword id="KW-0573">Peptidoglycan synthesis</keyword>
<proteinExistence type="evidence at protein level"/>
<comment type="function">
    <text evidence="1">Catalyzes the addition of L-lysine to the nucleotide precursor UDP-N-acetylmuramoyl-L-alanyl-D-glutamate (UMAG) in the biosynthesis of bacterial cell-wall peptidoglycan.</text>
</comment>
<comment type="catalytic activity">
    <reaction evidence="1">
        <text>UDP-N-acetyl-alpha-D-muramoyl-L-alanyl-D-glutamate + L-lysine + ATP = UDP-N-acetyl-alpha-D-muramoyl-L-alanyl-gamma-D-glutamyl-L-lysine + ADP + phosphate + H(+)</text>
        <dbReference type="Rhea" id="RHEA:17969"/>
        <dbReference type="ChEBI" id="CHEBI:15378"/>
        <dbReference type="ChEBI" id="CHEBI:30616"/>
        <dbReference type="ChEBI" id="CHEBI:32551"/>
        <dbReference type="ChEBI" id="CHEBI:43474"/>
        <dbReference type="ChEBI" id="CHEBI:83900"/>
        <dbReference type="ChEBI" id="CHEBI:83903"/>
        <dbReference type="ChEBI" id="CHEBI:456216"/>
        <dbReference type="EC" id="6.3.2.7"/>
    </reaction>
</comment>
<comment type="pathway">
    <text evidence="1">Cell wall biogenesis; peptidoglycan biosynthesis.</text>
</comment>
<comment type="subcellular location">
    <subcellularLocation>
        <location evidence="1">Cytoplasm</location>
    </subcellularLocation>
</comment>
<comment type="PTM">
    <text evidence="1">Carboxylation is probably crucial for Mg(2+) binding and, consequently, for the gamma-phosphate positioning of ATP.</text>
</comment>
<comment type="similarity">
    <text evidence="1">Belongs to the MurCDEF family. MurE subfamily.</text>
</comment>
<name>MURE_STAAN</name>
<dbReference type="EC" id="6.3.2.7" evidence="1"/>
<dbReference type="EMBL" id="BA000018">
    <property type="protein sequence ID" value="BAB42117.1"/>
    <property type="molecule type" value="Genomic_DNA"/>
</dbReference>
<dbReference type="PIR" id="B89870">
    <property type="entry name" value="B89870"/>
</dbReference>
<dbReference type="RefSeq" id="WP_000340119.1">
    <property type="nucleotide sequence ID" value="NC_002745.2"/>
</dbReference>
<dbReference type="SMR" id="P65480"/>
<dbReference type="EnsemblBacteria" id="BAB42117">
    <property type="protein sequence ID" value="BAB42117"/>
    <property type="gene ID" value="BAB42117"/>
</dbReference>
<dbReference type="KEGG" id="sau:SA0876"/>
<dbReference type="HOGENOM" id="CLU_022291_0_1_9"/>
<dbReference type="UniPathway" id="UPA00219"/>
<dbReference type="GO" id="GO:0005737">
    <property type="term" value="C:cytoplasm"/>
    <property type="evidence" value="ECO:0007669"/>
    <property type="project" value="UniProtKB-SubCell"/>
</dbReference>
<dbReference type="GO" id="GO:0005524">
    <property type="term" value="F:ATP binding"/>
    <property type="evidence" value="ECO:0007669"/>
    <property type="project" value="UniProtKB-UniRule"/>
</dbReference>
<dbReference type="GO" id="GO:0000287">
    <property type="term" value="F:magnesium ion binding"/>
    <property type="evidence" value="ECO:0007669"/>
    <property type="project" value="UniProtKB-UniRule"/>
</dbReference>
<dbReference type="GO" id="GO:0047482">
    <property type="term" value="F:UDP-N-acetylmuramoyl-L-alanyl-D-glutamate-L-lysine ligase activity"/>
    <property type="evidence" value="ECO:0007669"/>
    <property type="project" value="UniProtKB-UniRule"/>
</dbReference>
<dbReference type="GO" id="GO:0051301">
    <property type="term" value="P:cell division"/>
    <property type="evidence" value="ECO:0007669"/>
    <property type="project" value="UniProtKB-KW"/>
</dbReference>
<dbReference type="GO" id="GO:0071555">
    <property type="term" value="P:cell wall organization"/>
    <property type="evidence" value="ECO:0007669"/>
    <property type="project" value="UniProtKB-KW"/>
</dbReference>
<dbReference type="GO" id="GO:0009252">
    <property type="term" value="P:peptidoglycan biosynthetic process"/>
    <property type="evidence" value="ECO:0007669"/>
    <property type="project" value="UniProtKB-UniRule"/>
</dbReference>
<dbReference type="GO" id="GO:0008360">
    <property type="term" value="P:regulation of cell shape"/>
    <property type="evidence" value="ECO:0007669"/>
    <property type="project" value="UniProtKB-KW"/>
</dbReference>
<dbReference type="Gene3D" id="3.90.190.20">
    <property type="entry name" value="Mur ligase, C-terminal domain"/>
    <property type="match status" value="1"/>
</dbReference>
<dbReference type="Gene3D" id="3.40.1190.10">
    <property type="entry name" value="Mur-like, catalytic domain"/>
    <property type="match status" value="1"/>
</dbReference>
<dbReference type="Gene3D" id="3.40.1390.10">
    <property type="entry name" value="MurE/MurF, N-terminal domain"/>
    <property type="match status" value="1"/>
</dbReference>
<dbReference type="HAMAP" id="MF_00208">
    <property type="entry name" value="MurE"/>
    <property type="match status" value="1"/>
</dbReference>
<dbReference type="InterPro" id="IPR036565">
    <property type="entry name" value="Mur-like_cat_sf"/>
</dbReference>
<dbReference type="InterPro" id="IPR004101">
    <property type="entry name" value="Mur_ligase_C"/>
</dbReference>
<dbReference type="InterPro" id="IPR036615">
    <property type="entry name" value="Mur_ligase_C_dom_sf"/>
</dbReference>
<dbReference type="InterPro" id="IPR013221">
    <property type="entry name" value="Mur_ligase_cen"/>
</dbReference>
<dbReference type="InterPro" id="IPR035911">
    <property type="entry name" value="MurE/MurF_N"/>
</dbReference>
<dbReference type="InterPro" id="IPR005761">
    <property type="entry name" value="UDP-N-AcMur-Glu-dNH2Pim_ligase"/>
</dbReference>
<dbReference type="NCBIfam" id="TIGR01085">
    <property type="entry name" value="murE"/>
    <property type="match status" value="1"/>
</dbReference>
<dbReference type="NCBIfam" id="NF001126">
    <property type="entry name" value="PRK00139.1-4"/>
    <property type="match status" value="1"/>
</dbReference>
<dbReference type="NCBIfam" id="NF010628">
    <property type="entry name" value="PRK14022.1"/>
    <property type="match status" value="1"/>
</dbReference>
<dbReference type="PANTHER" id="PTHR23135">
    <property type="entry name" value="MUR LIGASE FAMILY MEMBER"/>
    <property type="match status" value="1"/>
</dbReference>
<dbReference type="PANTHER" id="PTHR23135:SF4">
    <property type="entry name" value="UDP-N-ACETYLMURAMOYL-L-ALANYL-D-GLUTAMATE--2,6-DIAMINOPIMELATE LIGASE MURE HOMOLOG, CHLOROPLASTIC"/>
    <property type="match status" value="1"/>
</dbReference>
<dbReference type="Pfam" id="PF02875">
    <property type="entry name" value="Mur_ligase_C"/>
    <property type="match status" value="1"/>
</dbReference>
<dbReference type="Pfam" id="PF08245">
    <property type="entry name" value="Mur_ligase_M"/>
    <property type="match status" value="1"/>
</dbReference>
<dbReference type="SUPFAM" id="SSF53623">
    <property type="entry name" value="MurD-like peptide ligases, catalytic domain"/>
    <property type="match status" value="1"/>
</dbReference>
<dbReference type="SUPFAM" id="SSF53244">
    <property type="entry name" value="MurD-like peptide ligases, peptide-binding domain"/>
    <property type="match status" value="1"/>
</dbReference>
<dbReference type="SUPFAM" id="SSF63418">
    <property type="entry name" value="MurE/MurF N-terminal domain"/>
    <property type="match status" value="1"/>
</dbReference>
<gene>
    <name evidence="1" type="primary">murE</name>
    <name type="ordered locus">SA0876</name>
</gene>
<accession>P65480</accession>
<accession>Q99V74</accession>